<organism>
    <name type="scientific">Bacillus cereus (strain AH820)</name>
    <dbReference type="NCBI Taxonomy" id="405535"/>
    <lineage>
        <taxon>Bacteria</taxon>
        <taxon>Bacillati</taxon>
        <taxon>Bacillota</taxon>
        <taxon>Bacilli</taxon>
        <taxon>Bacillales</taxon>
        <taxon>Bacillaceae</taxon>
        <taxon>Bacillus</taxon>
        <taxon>Bacillus cereus group</taxon>
    </lineage>
</organism>
<name>Y541_BACC0</name>
<gene>
    <name type="ordered locus">BCAH820_0541</name>
</gene>
<accession>B7JP75</accession>
<proteinExistence type="inferred from homology"/>
<protein>
    <recommendedName>
        <fullName evidence="1">Probable transcriptional regulatory protein BCAH820_0541</fullName>
    </recommendedName>
</protein>
<sequence>MGRKWNNIKDKKASKDANTSRIYAKFGREIYVAAKQGEPDPESNQALRVVLERAKTYNVPRTIIDRAVEKAKGGSEENYDELRYEGFGPNGAMVIVDTLTNNVNRTAADVRAAFSKNSGNMGVNGSVAYMFDATAVIGLEGKTSDEVLEILMEADVDARDILEEEDAVIVYAEPDQFHAVQSALKDAGVEEFTVAELTMLAQNDVTLPEDAQAQFEKMVDALEDLEDVQQVYHNVDLGE</sequence>
<reference key="1">
    <citation type="submission" date="2008-10" db="EMBL/GenBank/DDBJ databases">
        <title>Genome sequence of Bacillus cereus AH820.</title>
        <authorList>
            <person name="Dodson R.J."/>
            <person name="Durkin A.S."/>
            <person name="Rosovitz M.J."/>
            <person name="Rasko D.A."/>
            <person name="Hoffmaster A."/>
            <person name="Ravel J."/>
            <person name="Sutton G."/>
        </authorList>
    </citation>
    <scope>NUCLEOTIDE SEQUENCE [LARGE SCALE GENOMIC DNA]</scope>
    <source>
        <strain>AH820</strain>
    </source>
</reference>
<comment type="subcellular location">
    <subcellularLocation>
        <location evidence="1">Cytoplasm</location>
    </subcellularLocation>
</comment>
<comment type="similarity">
    <text evidence="1">Belongs to the TACO1 family. YeeN subfamily.</text>
</comment>
<feature type="chain" id="PRO_1000132151" description="Probable transcriptional regulatory protein BCAH820_0541">
    <location>
        <begin position="1"/>
        <end position="239"/>
    </location>
</feature>
<evidence type="ECO:0000255" key="1">
    <source>
        <dbReference type="HAMAP-Rule" id="MF_00918"/>
    </source>
</evidence>
<dbReference type="EMBL" id="CP001283">
    <property type="protein sequence ID" value="ACK91416.1"/>
    <property type="molecule type" value="Genomic_DNA"/>
</dbReference>
<dbReference type="RefSeq" id="WP_000532948.1">
    <property type="nucleotide sequence ID" value="NC_011773.1"/>
</dbReference>
<dbReference type="SMR" id="B7JP75"/>
<dbReference type="KEGG" id="bcu:BCAH820_0541"/>
<dbReference type="HOGENOM" id="CLU_062974_2_0_9"/>
<dbReference type="Proteomes" id="UP000001363">
    <property type="component" value="Chromosome"/>
</dbReference>
<dbReference type="GO" id="GO:0005829">
    <property type="term" value="C:cytosol"/>
    <property type="evidence" value="ECO:0007669"/>
    <property type="project" value="TreeGrafter"/>
</dbReference>
<dbReference type="GO" id="GO:0003677">
    <property type="term" value="F:DNA binding"/>
    <property type="evidence" value="ECO:0007669"/>
    <property type="project" value="UniProtKB-UniRule"/>
</dbReference>
<dbReference type="GO" id="GO:0006355">
    <property type="term" value="P:regulation of DNA-templated transcription"/>
    <property type="evidence" value="ECO:0007669"/>
    <property type="project" value="UniProtKB-UniRule"/>
</dbReference>
<dbReference type="FunFam" id="1.10.10.200:FF:000003">
    <property type="entry name" value="Probable transcriptional regulatory protein YeeN"/>
    <property type="match status" value="1"/>
</dbReference>
<dbReference type="FunFam" id="3.30.70.980:FF:000004">
    <property type="entry name" value="Probable transcriptional regulatory protein YeeN"/>
    <property type="match status" value="1"/>
</dbReference>
<dbReference type="Gene3D" id="1.10.10.200">
    <property type="match status" value="1"/>
</dbReference>
<dbReference type="Gene3D" id="3.30.70.980">
    <property type="match status" value="2"/>
</dbReference>
<dbReference type="HAMAP" id="MF_00693">
    <property type="entry name" value="Transcrip_reg_TACO1"/>
    <property type="match status" value="1"/>
</dbReference>
<dbReference type="HAMAP" id="MF_00918">
    <property type="entry name" value="Transcrip_reg_TACO1_YeeN"/>
    <property type="match status" value="1"/>
</dbReference>
<dbReference type="InterPro" id="IPR017856">
    <property type="entry name" value="Integrase-like_N"/>
</dbReference>
<dbReference type="InterPro" id="IPR048300">
    <property type="entry name" value="TACO1_YebC-like_2nd/3rd_dom"/>
</dbReference>
<dbReference type="InterPro" id="IPR049083">
    <property type="entry name" value="TACO1_YebC_N"/>
</dbReference>
<dbReference type="InterPro" id="IPR002876">
    <property type="entry name" value="Transcrip_reg_TACO1-like"/>
</dbReference>
<dbReference type="InterPro" id="IPR026564">
    <property type="entry name" value="Transcrip_reg_TACO1-like_dom3"/>
</dbReference>
<dbReference type="InterPro" id="IPR026562">
    <property type="entry name" value="Transcrip_reg_TACO1_YeeN"/>
</dbReference>
<dbReference type="InterPro" id="IPR029072">
    <property type="entry name" value="YebC-like"/>
</dbReference>
<dbReference type="NCBIfam" id="NF001030">
    <property type="entry name" value="PRK00110.1"/>
    <property type="match status" value="1"/>
</dbReference>
<dbReference type="NCBIfam" id="NF009044">
    <property type="entry name" value="PRK12378.1"/>
    <property type="match status" value="1"/>
</dbReference>
<dbReference type="NCBIfam" id="TIGR01033">
    <property type="entry name" value="YebC/PmpR family DNA-binding transcriptional regulator"/>
    <property type="match status" value="1"/>
</dbReference>
<dbReference type="PANTHER" id="PTHR12532">
    <property type="entry name" value="TRANSLATIONAL ACTIVATOR OF CYTOCHROME C OXIDASE 1"/>
    <property type="match status" value="1"/>
</dbReference>
<dbReference type="PANTHER" id="PTHR12532:SF0">
    <property type="entry name" value="TRANSLATIONAL ACTIVATOR OF CYTOCHROME C OXIDASE 1"/>
    <property type="match status" value="1"/>
</dbReference>
<dbReference type="Pfam" id="PF20772">
    <property type="entry name" value="TACO1_YebC_N"/>
    <property type="match status" value="1"/>
</dbReference>
<dbReference type="Pfam" id="PF01709">
    <property type="entry name" value="Transcrip_reg"/>
    <property type="match status" value="1"/>
</dbReference>
<dbReference type="SUPFAM" id="SSF75625">
    <property type="entry name" value="YebC-like"/>
    <property type="match status" value="1"/>
</dbReference>
<keyword id="KW-0963">Cytoplasm</keyword>
<keyword id="KW-0238">DNA-binding</keyword>
<keyword id="KW-0804">Transcription</keyword>
<keyword id="KW-0805">Transcription regulation</keyword>